<evidence type="ECO:0000250" key="1"/>
<evidence type="ECO:0000255" key="2">
    <source>
        <dbReference type="PROSITE-ProRule" id="PRU00316"/>
    </source>
</evidence>
<evidence type="ECO:0000305" key="3"/>
<reference key="1">
    <citation type="submission" date="2006-08" db="EMBL/GenBank/DDBJ databases">
        <authorList>
            <consortium name="NIH - Xenopus Gene Collection (XGC) project"/>
        </authorList>
    </citation>
    <scope>NUCLEOTIDE SEQUENCE [LARGE SCALE MRNA]</scope>
    <source>
        <tissue>Brain</tissue>
    </source>
</reference>
<comment type="function">
    <text evidence="1">May play a role in the development of the central system.</text>
</comment>
<comment type="similarity">
    <text evidence="3">Belongs to the PHYHIP family.</text>
</comment>
<proteinExistence type="evidence at transcript level"/>
<gene>
    <name type="primary">phyhipl</name>
</gene>
<organism>
    <name type="scientific">Xenopus tropicalis</name>
    <name type="common">Western clawed frog</name>
    <name type="synonym">Silurana tropicalis</name>
    <dbReference type="NCBI Taxonomy" id="8364"/>
    <lineage>
        <taxon>Eukaryota</taxon>
        <taxon>Metazoa</taxon>
        <taxon>Chordata</taxon>
        <taxon>Craniata</taxon>
        <taxon>Vertebrata</taxon>
        <taxon>Euteleostomi</taxon>
        <taxon>Amphibia</taxon>
        <taxon>Batrachia</taxon>
        <taxon>Anura</taxon>
        <taxon>Pipoidea</taxon>
        <taxon>Pipidae</taxon>
        <taxon>Xenopodinae</taxon>
        <taxon>Xenopus</taxon>
        <taxon>Silurana</taxon>
    </lineage>
</organism>
<sequence length="376" mass="42725">MEVPRLSQHISTPNSPCEEMIKNLSLENIQLCERDGNKSQDSGIAEMEELPVPHNIKISNITCDSFKISWDMDPKSKDRITHYFIDLNKKENKNSNKFKHKDVPTKLVAKAVPLPMTVRGHWFLSPRTEYTVAVQTASKQVDGDYVVSEWSEIIEFCTADYSKVHLTQLMEKAEAIAGRMLKFSVFYRNQHKEYFDYIREHHGNVMQPSLKDNSGSHGSPISTKLEGIFFSCNTEFNTGKPPQDSPYGRYRVEVPAEKLFNPNTNLYFGDFYCMYTAYHYVILVIAPMGSPGDEFCKQRLPQLSLSDNKFLTCTQEHGGLVFHQAQDVILEVIYTDPVDLSWGTVAEIIGHQLMSLSTANAKKDPSCKTCNISVGR</sequence>
<feature type="chain" id="PRO_0000338647" description="Phytanoyl-CoA hydroxylase-interacting protein-like">
    <location>
        <begin position="1"/>
        <end position="376"/>
    </location>
</feature>
<feature type="domain" description="Fibronectin type-III" evidence="2">
    <location>
        <begin position="52"/>
        <end position="161"/>
    </location>
</feature>
<protein>
    <recommendedName>
        <fullName>Phytanoyl-CoA hydroxylase-interacting protein-like</fullName>
    </recommendedName>
</protein>
<dbReference type="EMBL" id="BC121389">
    <property type="protein sequence ID" value="AAI21390.1"/>
    <property type="molecule type" value="mRNA"/>
</dbReference>
<dbReference type="RefSeq" id="NP_001072321.1">
    <property type="nucleotide sequence ID" value="NM_001078853.1"/>
</dbReference>
<dbReference type="SMR" id="Q0V9U8"/>
<dbReference type="FunCoup" id="Q0V9U8">
    <property type="interactions" value="740"/>
</dbReference>
<dbReference type="PaxDb" id="8364-ENSXETP00000011135"/>
<dbReference type="DNASU" id="779774"/>
<dbReference type="GeneID" id="779774"/>
<dbReference type="KEGG" id="xtr:779774"/>
<dbReference type="AGR" id="Xenbase:XB-GENE-954796"/>
<dbReference type="CTD" id="84457"/>
<dbReference type="Xenbase" id="XB-GENE-954796">
    <property type="gene designation" value="phyhipl"/>
</dbReference>
<dbReference type="eggNOG" id="ENOG502QQIT">
    <property type="taxonomic scope" value="Eukaryota"/>
</dbReference>
<dbReference type="HOGENOM" id="CLU_054218_1_0_1"/>
<dbReference type="InParanoid" id="Q0V9U8"/>
<dbReference type="OMA" id="QLMSMST"/>
<dbReference type="OrthoDB" id="6101761at2759"/>
<dbReference type="PhylomeDB" id="Q0V9U8"/>
<dbReference type="TreeFam" id="TF314485"/>
<dbReference type="Proteomes" id="UP000008143">
    <property type="component" value="Chromosome 7"/>
</dbReference>
<dbReference type="Bgee" id="ENSXETG00000005118">
    <property type="expression patterns" value="Expressed in brain and 14 other cell types or tissues"/>
</dbReference>
<dbReference type="ExpressionAtlas" id="Q0V9U8">
    <property type="expression patterns" value="baseline"/>
</dbReference>
<dbReference type="CDD" id="cd00063">
    <property type="entry name" value="FN3"/>
    <property type="match status" value="1"/>
</dbReference>
<dbReference type="FunFam" id="2.60.40.10:FF:000277">
    <property type="entry name" value="Phytanoyl-CoA hydroxylase-interacting protein-like protein"/>
    <property type="match status" value="1"/>
</dbReference>
<dbReference type="Gene3D" id="2.60.40.10">
    <property type="entry name" value="Immunoglobulins"/>
    <property type="match status" value="1"/>
</dbReference>
<dbReference type="InterPro" id="IPR003961">
    <property type="entry name" value="FN3_dom"/>
</dbReference>
<dbReference type="InterPro" id="IPR036116">
    <property type="entry name" value="FN3_sf"/>
</dbReference>
<dbReference type="InterPro" id="IPR013783">
    <property type="entry name" value="Ig-like_fold"/>
</dbReference>
<dbReference type="InterPro" id="IPR042868">
    <property type="entry name" value="PHYHIP/PHYHIPL"/>
</dbReference>
<dbReference type="InterPro" id="IPR045545">
    <property type="entry name" value="PHYIP/PHIPL_C"/>
</dbReference>
<dbReference type="PANTHER" id="PTHR15698:SF8">
    <property type="entry name" value="PHYTANOYL-COA HYDROXYLASE-INTERACTING PROTEIN-LIKE"/>
    <property type="match status" value="1"/>
</dbReference>
<dbReference type="PANTHER" id="PTHR15698">
    <property type="entry name" value="PROTEIN CBG15099"/>
    <property type="match status" value="1"/>
</dbReference>
<dbReference type="Pfam" id="PF00041">
    <property type="entry name" value="fn3"/>
    <property type="match status" value="1"/>
</dbReference>
<dbReference type="Pfam" id="PF19281">
    <property type="entry name" value="PHYHIP_C"/>
    <property type="match status" value="1"/>
</dbReference>
<dbReference type="SMART" id="SM00060">
    <property type="entry name" value="FN3"/>
    <property type="match status" value="1"/>
</dbReference>
<dbReference type="SUPFAM" id="SSF49265">
    <property type="entry name" value="Fibronectin type III"/>
    <property type="match status" value="1"/>
</dbReference>
<dbReference type="PROSITE" id="PS50853">
    <property type="entry name" value="FN3"/>
    <property type="match status" value="1"/>
</dbReference>
<name>PHIPL_XENTR</name>
<keyword id="KW-1185">Reference proteome</keyword>
<accession>Q0V9U8</accession>